<reference key="1">
    <citation type="journal article" date="2001" name="J. Bacteriol.">
        <title>Genome of the bacterium Streptococcus pneumoniae strain R6.</title>
        <authorList>
            <person name="Hoskins J."/>
            <person name="Alborn W.E. Jr."/>
            <person name="Arnold J."/>
            <person name="Blaszczak L.C."/>
            <person name="Burgett S."/>
            <person name="DeHoff B.S."/>
            <person name="Estrem S.T."/>
            <person name="Fritz L."/>
            <person name="Fu D.-J."/>
            <person name="Fuller W."/>
            <person name="Geringer C."/>
            <person name="Gilmour R."/>
            <person name="Glass J.S."/>
            <person name="Khoja H."/>
            <person name="Kraft A.R."/>
            <person name="Lagace R.E."/>
            <person name="LeBlanc D.J."/>
            <person name="Lee L.N."/>
            <person name="Lefkowitz E.J."/>
            <person name="Lu J."/>
            <person name="Matsushima P."/>
            <person name="McAhren S.M."/>
            <person name="McHenney M."/>
            <person name="McLeaster K."/>
            <person name="Mundy C.W."/>
            <person name="Nicas T.I."/>
            <person name="Norris F.H."/>
            <person name="O'Gara M."/>
            <person name="Peery R.B."/>
            <person name="Robertson G.T."/>
            <person name="Rockey P."/>
            <person name="Sun P.-M."/>
            <person name="Winkler M.E."/>
            <person name="Yang Y."/>
            <person name="Young-Bellido M."/>
            <person name="Zhao G."/>
            <person name="Zook C.A."/>
            <person name="Baltz R.H."/>
            <person name="Jaskunas S.R."/>
            <person name="Rosteck P.R. Jr."/>
            <person name="Skatrud P.L."/>
            <person name="Glass J.I."/>
        </authorList>
    </citation>
    <scope>NUCLEOTIDE SEQUENCE [LARGE SCALE GENOMIC DNA]</scope>
    <source>
        <strain>ATCC BAA-255 / R6</strain>
    </source>
</reference>
<dbReference type="EC" id="6.3.1.1" evidence="1"/>
<dbReference type="EMBL" id="AE007317">
    <property type="protein sequence ID" value="AAL00588.1"/>
    <property type="status" value="ALT_INIT"/>
    <property type="molecule type" value="Genomic_DNA"/>
</dbReference>
<dbReference type="PIR" id="G98094">
    <property type="entry name" value="G98094"/>
</dbReference>
<dbReference type="RefSeq" id="NP_359377.1">
    <property type="nucleotide sequence ID" value="NC_003098.1"/>
</dbReference>
<dbReference type="RefSeq" id="WP_000747995.1">
    <property type="nucleotide sequence ID" value="NC_003098.1"/>
</dbReference>
<dbReference type="SMR" id="Q8CWN8"/>
<dbReference type="STRING" id="171101.spr1785"/>
<dbReference type="KEGG" id="spr:spr1785"/>
<dbReference type="PATRIC" id="fig|171101.6.peg.1927"/>
<dbReference type="eggNOG" id="COG2502">
    <property type="taxonomic scope" value="Bacteria"/>
</dbReference>
<dbReference type="HOGENOM" id="CLU_071543_0_0_9"/>
<dbReference type="UniPathway" id="UPA00134">
    <property type="reaction ID" value="UER00194"/>
</dbReference>
<dbReference type="Proteomes" id="UP000000586">
    <property type="component" value="Chromosome"/>
</dbReference>
<dbReference type="GO" id="GO:0005829">
    <property type="term" value="C:cytosol"/>
    <property type="evidence" value="ECO:0000318"/>
    <property type="project" value="GO_Central"/>
</dbReference>
<dbReference type="GO" id="GO:0004071">
    <property type="term" value="F:aspartate-ammonia ligase activity"/>
    <property type="evidence" value="ECO:0000318"/>
    <property type="project" value="GO_Central"/>
</dbReference>
<dbReference type="GO" id="GO:0005524">
    <property type="term" value="F:ATP binding"/>
    <property type="evidence" value="ECO:0007669"/>
    <property type="project" value="UniProtKB-UniRule"/>
</dbReference>
<dbReference type="GO" id="GO:0140096">
    <property type="term" value="F:catalytic activity, acting on a protein"/>
    <property type="evidence" value="ECO:0007669"/>
    <property type="project" value="UniProtKB-ARBA"/>
</dbReference>
<dbReference type="GO" id="GO:0016740">
    <property type="term" value="F:transferase activity"/>
    <property type="evidence" value="ECO:0007669"/>
    <property type="project" value="UniProtKB-ARBA"/>
</dbReference>
<dbReference type="GO" id="GO:0006529">
    <property type="term" value="P:asparagine biosynthetic process"/>
    <property type="evidence" value="ECO:0000318"/>
    <property type="project" value="GO_Central"/>
</dbReference>
<dbReference type="GO" id="GO:0070981">
    <property type="term" value="P:L-asparagine biosynthetic process"/>
    <property type="evidence" value="ECO:0007669"/>
    <property type="project" value="UniProtKB-UniRule"/>
</dbReference>
<dbReference type="CDD" id="cd00645">
    <property type="entry name" value="AsnA"/>
    <property type="match status" value="1"/>
</dbReference>
<dbReference type="Gene3D" id="3.30.930.10">
    <property type="entry name" value="Bira Bifunctional Protein, Domain 2"/>
    <property type="match status" value="1"/>
</dbReference>
<dbReference type="HAMAP" id="MF_00555">
    <property type="entry name" value="AsnA"/>
    <property type="match status" value="1"/>
</dbReference>
<dbReference type="InterPro" id="IPR006195">
    <property type="entry name" value="aa-tRNA-synth_II"/>
</dbReference>
<dbReference type="InterPro" id="IPR045864">
    <property type="entry name" value="aa-tRNA-synth_II/BPL/LPL"/>
</dbReference>
<dbReference type="InterPro" id="IPR004618">
    <property type="entry name" value="AsnA"/>
</dbReference>
<dbReference type="NCBIfam" id="TIGR00669">
    <property type="entry name" value="asnA"/>
    <property type="match status" value="1"/>
</dbReference>
<dbReference type="PANTHER" id="PTHR30073">
    <property type="entry name" value="ASPARTATE--AMMONIA LIGASE"/>
    <property type="match status" value="1"/>
</dbReference>
<dbReference type="PANTHER" id="PTHR30073:SF5">
    <property type="entry name" value="ASPARTATE--AMMONIA LIGASE"/>
    <property type="match status" value="1"/>
</dbReference>
<dbReference type="Pfam" id="PF03590">
    <property type="entry name" value="AsnA"/>
    <property type="match status" value="1"/>
</dbReference>
<dbReference type="PIRSF" id="PIRSF001555">
    <property type="entry name" value="Asp_ammon_ligase"/>
    <property type="match status" value="1"/>
</dbReference>
<dbReference type="SUPFAM" id="SSF55681">
    <property type="entry name" value="Class II aaRS and biotin synthetases"/>
    <property type="match status" value="1"/>
</dbReference>
<dbReference type="PROSITE" id="PS50862">
    <property type="entry name" value="AA_TRNA_LIGASE_II"/>
    <property type="match status" value="1"/>
</dbReference>
<accession>Q8CWN8</accession>
<evidence type="ECO:0000255" key="1">
    <source>
        <dbReference type="HAMAP-Rule" id="MF_00555"/>
    </source>
</evidence>
<evidence type="ECO:0000305" key="2"/>
<protein>
    <recommendedName>
        <fullName evidence="1">Aspartate--ammonia ligase</fullName>
        <ecNumber evidence="1">6.3.1.1</ecNumber>
    </recommendedName>
    <alternativeName>
        <fullName evidence="1">Asparagine synthetase A</fullName>
    </alternativeName>
</protein>
<sequence>MKKSFIHQQEEISFVKNTFTQYLKDKLEVVEVQGPILSKVGDGMQDNLSGVENPVSVKVLQIPDATYEVVHSLAKWKRHTLARFGFGEGEGLFVHMKALRPDEDSLDATHSVYVDQWDWEKVIPNGKRNIVYLKETVEKIYKAIRLTELAVEARYDIESILPKQITFIHTEELVERYPDLTSKERENAICKEFGAVFLIGIGGELPDGKPHDGRAPDYDDWTSESENGYKGLNGDILVWNESLGGAFELSSMGIRVDEETLRRQVEITGDEDRLELEWHKSLLNGLFPLTIGGGIGQSRMAMFLLRKRHIGEVQTSVWPQEVRDTYENIL</sequence>
<comment type="catalytic activity">
    <reaction evidence="1">
        <text>L-aspartate + NH4(+) + ATP = L-asparagine + AMP + diphosphate + H(+)</text>
        <dbReference type="Rhea" id="RHEA:11372"/>
        <dbReference type="ChEBI" id="CHEBI:15378"/>
        <dbReference type="ChEBI" id="CHEBI:28938"/>
        <dbReference type="ChEBI" id="CHEBI:29991"/>
        <dbReference type="ChEBI" id="CHEBI:30616"/>
        <dbReference type="ChEBI" id="CHEBI:33019"/>
        <dbReference type="ChEBI" id="CHEBI:58048"/>
        <dbReference type="ChEBI" id="CHEBI:456215"/>
        <dbReference type="EC" id="6.3.1.1"/>
    </reaction>
</comment>
<comment type="pathway">
    <text evidence="1">Amino-acid biosynthesis; L-asparagine biosynthesis; L-asparagine from L-aspartate (ammonia route): step 1/1.</text>
</comment>
<comment type="subcellular location">
    <subcellularLocation>
        <location evidence="1">Cytoplasm</location>
    </subcellularLocation>
</comment>
<comment type="similarity">
    <text evidence="1">Belongs to the class-II aminoacyl-tRNA synthetase family. AsnA subfamily.</text>
</comment>
<comment type="sequence caution" evidence="2">
    <conflict type="erroneous initiation">
        <sequence resource="EMBL-CDS" id="AAL00588"/>
    </conflict>
</comment>
<proteinExistence type="inferred from homology"/>
<keyword id="KW-0028">Amino-acid biosynthesis</keyword>
<keyword id="KW-0061">Asparagine biosynthesis</keyword>
<keyword id="KW-0067">ATP-binding</keyword>
<keyword id="KW-0963">Cytoplasm</keyword>
<keyword id="KW-0436">Ligase</keyword>
<keyword id="KW-0547">Nucleotide-binding</keyword>
<keyword id="KW-1185">Reference proteome</keyword>
<feature type="chain" id="PRO_0000195892" description="Aspartate--ammonia ligase">
    <location>
        <begin position="1"/>
        <end position="330"/>
    </location>
</feature>
<name>ASNA_STRR6</name>
<organism>
    <name type="scientific">Streptococcus pneumoniae (strain ATCC BAA-255 / R6)</name>
    <dbReference type="NCBI Taxonomy" id="171101"/>
    <lineage>
        <taxon>Bacteria</taxon>
        <taxon>Bacillati</taxon>
        <taxon>Bacillota</taxon>
        <taxon>Bacilli</taxon>
        <taxon>Lactobacillales</taxon>
        <taxon>Streptococcaceae</taxon>
        <taxon>Streptococcus</taxon>
    </lineage>
</organism>
<gene>
    <name evidence="1" type="primary">asnA</name>
    <name type="ordered locus">spr1785</name>
</gene>